<dbReference type="EMBL" id="X13933">
    <property type="protein sequence ID" value="CAA32120.1"/>
    <property type="molecule type" value="mRNA"/>
</dbReference>
<dbReference type="EMBL" id="X13931">
    <property type="protein sequence ID" value="CAA32119.1"/>
    <property type="molecule type" value="Genomic_DNA"/>
</dbReference>
<dbReference type="EMBL" id="X13932">
    <property type="protein sequence ID" value="CAA32119.1"/>
    <property type="status" value="JOINED"/>
    <property type="molecule type" value="Genomic_DNA"/>
</dbReference>
<dbReference type="EMBL" id="X05117">
    <property type="protein sequence ID" value="CAA32119.1"/>
    <property type="status" value="JOINED"/>
    <property type="molecule type" value="Genomic_DNA"/>
</dbReference>
<dbReference type="EMBL" id="AF178845">
    <property type="protein sequence ID" value="AAD55398.1"/>
    <property type="molecule type" value="mRNA"/>
</dbReference>
<dbReference type="PIR" id="S03206">
    <property type="entry name" value="MCRT"/>
</dbReference>
<dbReference type="RefSeq" id="NP_059022.1">
    <property type="nucleotide sequence ID" value="NM_017326.3"/>
</dbReference>
<dbReference type="RefSeq" id="NP_114175.1">
    <property type="nucleotide sequence ID" value="NM_031969.3"/>
</dbReference>
<dbReference type="PDB" id="1G4Y">
    <property type="method" value="X-ray"/>
    <property type="resolution" value="1.60 A"/>
    <property type="chains" value="R=2-149"/>
</dbReference>
<dbReference type="PDB" id="1NIW">
    <property type="method" value="X-ray"/>
    <property type="resolution" value="2.05 A"/>
    <property type="chains" value="A/C/E/G=2-149"/>
</dbReference>
<dbReference type="PDB" id="1QX5">
    <property type="method" value="X-ray"/>
    <property type="resolution" value="2.54 A"/>
    <property type="chains" value="B/D/I/J/K/R/T/Y=2-149"/>
</dbReference>
<dbReference type="PDB" id="1QX7">
    <property type="method" value="X-ray"/>
    <property type="resolution" value="3.09 A"/>
    <property type="chains" value="A/B/I/M/R=2-149"/>
</dbReference>
<dbReference type="PDB" id="1UP5">
    <property type="method" value="X-ray"/>
    <property type="resolution" value="1.90 A"/>
    <property type="chains" value="A/B=2-149"/>
</dbReference>
<dbReference type="PDB" id="2HQW">
    <property type="method" value="X-ray"/>
    <property type="resolution" value="1.90 A"/>
    <property type="chains" value="A=2-149"/>
</dbReference>
<dbReference type="PDB" id="2MGU">
    <property type="method" value="NMR"/>
    <property type="chains" value="A=2-149"/>
</dbReference>
<dbReference type="PDB" id="2PQ3">
    <property type="method" value="X-ray"/>
    <property type="resolution" value="1.30 A"/>
    <property type="chains" value="A=2-77"/>
</dbReference>
<dbReference type="PDB" id="2YGG">
    <property type="method" value="X-ray"/>
    <property type="resolution" value="2.23 A"/>
    <property type="chains" value="B=1-149"/>
</dbReference>
<dbReference type="PDB" id="3B32">
    <property type="method" value="X-ray"/>
    <property type="resolution" value="1.60 A"/>
    <property type="chains" value="A=2-76"/>
</dbReference>
<dbReference type="PDB" id="3BXK">
    <property type="method" value="X-ray"/>
    <property type="resolution" value="2.55 A"/>
    <property type="chains" value="A/C=2-149"/>
</dbReference>
<dbReference type="PDB" id="3BXL">
    <property type="method" value="X-ray"/>
    <property type="resolution" value="2.30 A"/>
    <property type="chains" value="A=2-149"/>
</dbReference>
<dbReference type="PDB" id="3CLN">
    <property type="method" value="X-ray"/>
    <property type="resolution" value="2.20 A"/>
    <property type="chains" value="A=2-149"/>
</dbReference>
<dbReference type="PDB" id="3EK4">
    <property type="method" value="X-ray"/>
    <property type="resolution" value="2.65 A"/>
    <property type="chains" value="A=3-149"/>
</dbReference>
<dbReference type="PDB" id="3EK7">
    <property type="method" value="X-ray"/>
    <property type="resolution" value="1.85 A"/>
    <property type="chains" value="A=3-149"/>
</dbReference>
<dbReference type="PDB" id="3EK8">
    <property type="method" value="X-ray"/>
    <property type="resolution" value="2.80 A"/>
    <property type="chains" value="A=3-149"/>
</dbReference>
<dbReference type="PDB" id="3EKH">
    <property type="method" value="X-ray"/>
    <property type="resolution" value="2.00 A"/>
    <property type="chains" value="A=3-149"/>
</dbReference>
<dbReference type="PDB" id="3EKJ">
    <property type="method" value="X-ray"/>
    <property type="resolution" value="2.80 A"/>
    <property type="chains" value="A=3-149"/>
</dbReference>
<dbReference type="PDB" id="3EVR">
    <property type="method" value="X-ray"/>
    <property type="resolution" value="2.00 A"/>
    <property type="chains" value="A=3-148"/>
</dbReference>
<dbReference type="PDB" id="3EVU">
    <property type="method" value="X-ray"/>
    <property type="resolution" value="1.75 A"/>
    <property type="chains" value="A=3-148"/>
</dbReference>
<dbReference type="PDB" id="3EVV">
    <property type="method" value="X-ray"/>
    <property type="resolution" value="2.60 A"/>
    <property type="chains" value="A=3-148"/>
</dbReference>
<dbReference type="PDB" id="3IFK">
    <property type="method" value="X-ray"/>
    <property type="resolution" value="2.03 A"/>
    <property type="chains" value="A/B=2-91"/>
</dbReference>
<dbReference type="PDB" id="3SG2">
    <property type="method" value="X-ray"/>
    <property type="resolution" value="2.00 A"/>
    <property type="chains" value="A=3-149"/>
</dbReference>
<dbReference type="PDB" id="3SG3">
    <property type="method" value="X-ray"/>
    <property type="resolution" value="2.10 A"/>
    <property type="chains" value="A=3-149"/>
</dbReference>
<dbReference type="PDB" id="3SG4">
    <property type="method" value="X-ray"/>
    <property type="resolution" value="2.40 A"/>
    <property type="chains" value="A=3-149"/>
</dbReference>
<dbReference type="PDB" id="3SG5">
    <property type="method" value="X-ray"/>
    <property type="resolution" value="1.90 A"/>
    <property type="chains" value="A=3-149"/>
</dbReference>
<dbReference type="PDB" id="3SG6">
    <property type="method" value="X-ray"/>
    <property type="resolution" value="1.70 A"/>
    <property type="chains" value="A=3-149"/>
</dbReference>
<dbReference type="PDB" id="3SG7">
    <property type="method" value="X-ray"/>
    <property type="resolution" value="1.90 A"/>
    <property type="chains" value="A=3-149"/>
</dbReference>
<dbReference type="PDB" id="3SJQ">
    <property type="method" value="X-ray"/>
    <property type="resolution" value="1.90 A"/>
    <property type="chains" value="A/B=1-149"/>
</dbReference>
<dbReference type="PDB" id="3WLC">
    <property type="method" value="X-ray"/>
    <property type="resolution" value="2.49 A"/>
    <property type="chains" value="A=3-149"/>
</dbReference>
<dbReference type="PDB" id="3WLD">
    <property type="method" value="X-ray"/>
    <property type="resolution" value="2.70 A"/>
    <property type="chains" value="A=3-149"/>
</dbReference>
<dbReference type="PDB" id="4EHQ">
    <property type="method" value="X-ray"/>
    <property type="resolution" value="1.90 A"/>
    <property type="chains" value="A=2-149"/>
</dbReference>
<dbReference type="PDB" id="4G27">
    <property type="method" value="X-ray"/>
    <property type="resolution" value="1.65 A"/>
    <property type="chains" value="R=1-149"/>
</dbReference>
<dbReference type="PDB" id="4G28">
    <property type="method" value="X-ray"/>
    <property type="resolution" value="1.63 A"/>
    <property type="chains" value="R=1-149"/>
</dbReference>
<dbReference type="PDB" id="4I2Y">
    <property type="method" value="X-ray"/>
    <property type="resolution" value="2.20 A"/>
    <property type="chains" value="A/B=3-149"/>
</dbReference>
<dbReference type="PDB" id="4IL1">
    <property type="method" value="X-ray"/>
    <property type="resolution" value="3.00 A"/>
    <property type="chains" value="A/B/C/D=1-149"/>
</dbReference>
<dbReference type="PDB" id="4J9Y">
    <property type="method" value="X-ray"/>
    <property type="resolution" value="1.51 A"/>
    <property type="chains" value="R=1-149"/>
</dbReference>
<dbReference type="PDB" id="4J9Z">
    <property type="method" value="X-ray"/>
    <property type="resolution" value="1.66 A"/>
    <property type="chains" value="R=1-149"/>
</dbReference>
<dbReference type="PDB" id="4OY4">
    <property type="method" value="X-ray"/>
    <property type="resolution" value="2.03 A"/>
    <property type="chains" value="A=3-147"/>
</dbReference>
<dbReference type="PDB" id="4QNH">
    <property type="method" value="X-ray"/>
    <property type="resolution" value="2.02 A"/>
    <property type="chains" value="R=1-149"/>
</dbReference>
<dbReference type="PDB" id="4RJD">
    <property type="method" value="X-ray"/>
    <property type="resolution" value="2.00 A"/>
    <property type="chains" value="A/B=83-148"/>
</dbReference>
<dbReference type="PDB" id="6CZQ">
    <property type="method" value="X-ray"/>
    <property type="resolution" value="2.20 A"/>
    <property type="chains" value="R=5-148"/>
</dbReference>
<dbReference type="PDB" id="6DMW">
    <property type="method" value="EM"/>
    <property type="resolution" value="4.40 A"/>
    <property type="chains" value="E=1-149"/>
</dbReference>
<dbReference type="PDB" id="6MBA">
    <property type="method" value="X-ray"/>
    <property type="resolution" value="1.80 A"/>
    <property type="chains" value="B=1-149"/>
</dbReference>
<dbReference type="PDB" id="6MC9">
    <property type="method" value="X-ray"/>
    <property type="resolution" value="3.30 A"/>
    <property type="chains" value="B=1-149"/>
</dbReference>
<dbReference type="PDB" id="7NQC">
    <property type="method" value="NMR"/>
    <property type="chains" value="A=1-149"/>
</dbReference>
<dbReference type="PDBsum" id="1G4Y"/>
<dbReference type="PDBsum" id="1NIW"/>
<dbReference type="PDBsum" id="1QX5"/>
<dbReference type="PDBsum" id="1QX7"/>
<dbReference type="PDBsum" id="1UP5"/>
<dbReference type="PDBsum" id="2HQW"/>
<dbReference type="PDBsum" id="2MGU"/>
<dbReference type="PDBsum" id="2PQ3"/>
<dbReference type="PDBsum" id="2YGG"/>
<dbReference type="PDBsum" id="3B32"/>
<dbReference type="PDBsum" id="3BXK"/>
<dbReference type="PDBsum" id="3BXL"/>
<dbReference type="PDBsum" id="3CLN"/>
<dbReference type="PDBsum" id="3EK4"/>
<dbReference type="PDBsum" id="3EK7"/>
<dbReference type="PDBsum" id="3EK8"/>
<dbReference type="PDBsum" id="3EKH"/>
<dbReference type="PDBsum" id="3EKJ"/>
<dbReference type="PDBsum" id="3EVR"/>
<dbReference type="PDBsum" id="3EVU"/>
<dbReference type="PDBsum" id="3EVV"/>
<dbReference type="PDBsum" id="3IFK"/>
<dbReference type="PDBsum" id="3SG2"/>
<dbReference type="PDBsum" id="3SG3"/>
<dbReference type="PDBsum" id="3SG4"/>
<dbReference type="PDBsum" id="3SG5"/>
<dbReference type="PDBsum" id="3SG6"/>
<dbReference type="PDBsum" id="3SG7"/>
<dbReference type="PDBsum" id="3SJQ"/>
<dbReference type="PDBsum" id="3WLC"/>
<dbReference type="PDBsum" id="3WLD"/>
<dbReference type="PDBsum" id="4EHQ"/>
<dbReference type="PDBsum" id="4G27"/>
<dbReference type="PDBsum" id="4G28"/>
<dbReference type="PDBsum" id="4I2Y"/>
<dbReference type="PDBsum" id="4IL1"/>
<dbReference type="PDBsum" id="4J9Y"/>
<dbReference type="PDBsum" id="4J9Z"/>
<dbReference type="PDBsum" id="4OY4"/>
<dbReference type="PDBsum" id="4QNH"/>
<dbReference type="PDBsum" id="4RJD"/>
<dbReference type="PDBsum" id="6CZQ"/>
<dbReference type="PDBsum" id="6DMW"/>
<dbReference type="PDBsum" id="6MBA"/>
<dbReference type="PDBsum" id="6MC9"/>
<dbReference type="PDBsum" id="7NQC"/>
<dbReference type="EMDB" id="EMD-7967"/>
<dbReference type="SMR" id="P0DP29"/>
<dbReference type="CORUM" id="P0DP29"/>
<dbReference type="FunCoup" id="P0DP29">
    <property type="interactions" value="4840"/>
</dbReference>
<dbReference type="STRING" id="10116.ENSRNOP00000022603"/>
<dbReference type="iPTMnet" id="P0DP29"/>
<dbReference type="MetOSite" id="P0DP29"/>
<dbReference type="PhosphoSitePlus" id="P0DP29"/>
<dbReference type="jPOST" id="P0DP29"/>
<dbReference type="PaxDb" id="10116-ENSRNOP00000022603"/>
<dbReference type="Ensembl" id="ENSRNOT00000064679.3">
    <property type="protein sequence ID" value="ENSRNOP00000063822.1"/>
    <property type="gene ID" value="ENSRNOG00000004060.8"/>
</dbReference>
<dbReference type="GeneID" id="24242"/>
<dbReference type="GeneID" id="50663"/>
<dbReference type="KEGG" id="rno:24242"/>
<dbReference type="KEGG" id="rno:24244"/>
<dbReference type="KEGG" id="rno:50663"/>
<dbReference type="AGR" id="RGD:2257"/>
<dbReference type="AGR" id="RGD:2258"/>
<dbReference type="AGR" id="RGD:2259"/>
<dbReference type="CTD" id="801"/>
<dbReference type="CTD" id="805"/>
<dbReference type="CTD" id="808"/>
<dbReference type="RGD" id="2257">
    <property type="gene designation" value="Calm1"/>
</dbReference>
<dbReference type="VEuPathDB" id="HostDB:ENSRNOG00000016770"/>
<dbReference type="eggNOG" id="KOG0027">
    <property type="taxonomic scope" value="Eukaryota"/>
</dbReference>
<dbReference type="InParanoid" id="P0DP29"/>
<dbReference type="OrthoDB" id="17077at9989"/>
<dbReference type="EvolutionaryTrace" id="P0DP29"/>
<dbReference type="PRO" id="PR:P0DP29"/>
<dbReference type="Proteomes" id="UP000002494">
    <property type="component" value="Chromosome 6"/>
</dbReference>
<dbReference type="Bgee" id="ENSRNOG00000004060">
    <property type="expression patterns" value="Expressed in Ammon's horn and 19 other cell types or tissues"/>
</dbReference>
<dbReference type="ExpressionAtlas" id="P0DP29">
    <property type="expression patterns" value="baseline and differential"/>
</dbReference>
<dbReference type="GO" id="GO:0034704">
    <property type="term" value="C:calcium channel complex"/>
    <property type="evidence" value="ECO:0000266"/>
    <property type="project" value="RGD"/>
</dbReference>
<dbReference type="GO" id="GO:0044305">
    <property type="term" value="C:calyx of Held"/>
    <property type="evidence" value="ECO:0000266"/>
    <property type="project" value="RGD"/>
</dbReference>
<dbReference type="GO" id="GO:1902494">
    <property type="term" value="C:catalytic complex"/>
    <property type="evidence" value="ECO:0000266"/>
    <property type="project" value="RGD"/>
</dbReference>
<dbReference type="GO" id="GO:0005813">
    <property type="term" value="C:centrosome"/>
    <property type="evidence" value="ECO:0000266"/>
    <property type="project" value="RGD"/>
</dbReference>
<dbReference type="GO" id="GO:0005737">
    <property type="term" value="C:cytoplasm"/>
    <property type="evidence" value="ECO:0000250"/>
    <property type="project" value="UniProtKB"/>
</dbReference>
<dbReference type="GO" id="GO:0005829">
    <property type="term" value="C:cytosol"/>
    <property type="evidence" value="ECO:0000304"/>
    <property type="project" value="Reactome"/>
</dbReference>
<dbReference type="GO" id="GO:0030426">
    <property type="term" value="C:growth cone"/>
    <property type="evidence" value="ECO:0000314"/>
    <property type="project" value="RGD"/>
</dbReference>
<dbReference type="GO" id="GO:0005739">
    <property type="term" value="C:mitochondrion"/>
    <property type="evidence" value="ECO:0007669"/>
    <property type="project" value="GOC"/>
</dbReference>
<dbReference type="GO" id="GO:0043209">
    <property type="term" value="C:myelin sheath"/>
    <property type="evidence" value="ECO:0000314"/>
    <property type="project" value="CAFA"/>
</dbReference>
<dbReference type="GO" id="GO:0005654">
    <property type="term" value="C:nucleoplasm"/>
    <property type="evidence" value="ECO:0000304"/>
    <property type="project" value="Reactome"/>
</dbReference>
<dbReference type="GO" id="GO:0099524">
    <property type="term" value="C:postsynaptic cytosol"/>
    <property type="evidence" value="ECO:0000314"/>
    <property type="project" value="SynGO"/>
</dbReference>
<dbReference type="GO" id="GO:0099523">
    <property type="term" value="C:presynaptic cytosol"/>
    <property type="evidence" value="ECO:0000314"/>
    <property type="project" value="SynGO"/>
</dbReference>
<dbReference type="GO" id="GO:0032991">
    <property type="term" value="C:protein-containing complex"/>
    <property type="evidence" value="ECO:0000266"/>
    <property type="project" value="RGD"/>
</dbReference>
<dbReference type="GO" id="GO:0030017">
    <property type="term" value="C:sarcomere"/>
    <property type="evidence" value="ECO:0000266"/>
    <property type="project" value="RGD"/>
</dbReference>
<dbReference type="GO" id="GO:0098685">
    <property type="term" value="C:Schaffer collateral - CA1 synapse"/>
    <property type="evidence" value="ECO:0000314"/>
    <property type="project" value="SynGO"/>
</dbReference>
<dbReference type="GO" id="GO:0097225">
    <property type="term" value="C:sperm midpiece"/>
    <property type="evidence" value="ECO:0000266"/>
    <property type="project" value="RGD"/>
</dbReference>
<dbReference type="GO" id="GO:0005876">
    <property type="term" value="C:spindle microtubule"/>
    <property type="evidence" value="ECO:0000266"/>
    <property type="project" value="RGD"/>
</dbReference>
<dbReference type="GO" id="GO:0000922">
    <property type="term" value="C:spindle pole"/>
    <property type="evidence" value="ECO:0000266"/>
    <property type="project" value="RGD"/>
</dbReference>
<dbReference type="GO" id="GO:0031982">
    <property type="term" value="C:vesicle"/>
    <property type="evidence" value="ECO:0007669"/>
    <property type="project" value="Ensembl"/>
</dbReference>
<dbReference type="GO" id="GO:0008076">
    <property type="term" value="C:voltage-gated potassium channel complex"/>
    <property type="evidence" value="ECO:0000266"/>
    <property type="project" value="RGD"/>
</dbReference>
<dbReference type="GO" id="GO:0010856">
    <property type="term" value="F:adenylate cyclase activator activity"/>
    <property type="evidence" value="ECO:0000266"/>
    <property type="project" value="RGD"/>
</dbReference>
<dbReference type="GO" id="GO:0008179">
    <property type="term" value="F:adenylate cyclase binding"/>
    <property type="evidence" value="ECO:0000266"/>
    <property type="project" value="RGD"/>
</dbReference>
<dbReference type="GO" id="GO:0019855">
    <property type="term" value="F:calcium channel inhibitor activity"/>
    <property type="evidence" value="ECO:0000250"/>
    <property type="project" value="UniProtKB"/>
</dbReference>
<dbReference type="GO" id="GO:0005246">
    <property type="term" value="F:calcium channel regulator activity"/>
    <property type="evidence" value="ECO:0000303"/>
    <property type="project" value="RGD"/>
</dbReference>
<dbReference type="GO" id="GO:0005509">
    <property type="term" value="F:calcium ion binding"/>
    <property type="evidence" value="ECO:0000314"/>
    <property type="project" value="RGD"/>
</dbReference>
<dbReference type="GO" id="GO:0048306">
    <property type="term" value="F:calcium-dependent protein binding"/>
    <property type="evidence" value="ECO:0000353"/>
    <property type="project" value="RGD"/>
</dbReference>
<dbReference type="GO" id="GO:0050998">
    <property type="term" value="F:nitric-oxide synthase binding"/>
    <property type="evidence" value="ECO:0000314"/>
    <property type="project" value="RGD"/>
</dbReference>
<dbReference type="GO" id="GO:0030235">
    <property type="term" value="F:nitric-oxide synthase regulator activity"/>
    <property type="evidence" value="ECO:0000314"/>
    <property type="project" value="RGD"/>
</dbReference>
<dbReference type="GO" id="GO:0043548">
    <property type="term" value="F:phosphatidylinositol 3-kinase binding"/>
    <property type="evidence" value="ECO:0000353"/>
    <property type="project" value="RGD"/>
</dbReference>
<dbReference type="GO" id="GO:0019904">
    <property type="term" value="F:protein domain specific binding"/>
    <property type="evidence" value="ECO:0000353"/>
    <property type="project" value="RGD"/>
</dbReference>
<dbReference type="GO" id="GO:0019901">
    <property type="term" value="F:protein kinase binding"/>
    <property type="evidence" value="ECO:0000266"/>
    <property type="project" value="RGD"/>
</dbReference>
<dbReference type="GO" id="GO:0072542">
    <property type="term" value="F:protein phosphatase activator activity"/>
    <property type="evidence" value="ECO:0000266"/>
    <property type="project" value="RGD"/>
</dbReference>
<dbReference type="GO" id="GO:0043539">
    <property type="term" value="F:protein serine/threonine kinase activator activity"/>
    <property type="evidence" value="ECO:0000266"/>
    <property type="project" value="RGD"/>
</dbReference>
<dbReference type="GO" id="GO:0031432">
    <property type="term" value="F:titin binding"/>
    <property type="evidence" value="ECO:0000266"/>
    <property type="project" value="RGD"/>
</dbReference>
<dbReference type="GO" id="GO:0044325">
    <property type="term" value="F:transmembrane transporter binding"/>
    <property type="evidence" value="ECO:0000314"/>
    <property type="project" value="RGD"/>
</dbReference>
<dbReference type="GO" id="GO:0031800">
    <property type="term" value="F:type 3 metabotropic glutamate receptor binding"/>
    <property type="evidence" value="ECO:0000353"/>
    <property type="project" value="RGD"/>
</dbReference>
<dbReference type="GO" id="GO:0016240">
    <property type="term" value="P:autophagosome membrane docking"/>
    <property type="evidence" value="ECO:0000250"/>
    <property type="project" value="UniProtKB"/>
</dbReference>
<dbReference type="GO" id="GO:0097720">
    <property type="term" value="P:calcineurin-mediated signaling"/>
    <property type="evidence" value="ECO:0000266"/>
    <property type="project" value="RGD"/>
</dbReference>
<dbReference type="GO" id="GO:0035458">
    <property type="term" value="P:cellular response to interferon-beta"/>
    <property type="evidence" value="ECO:0000266"/>
    <property type="project" value="RGD"/>
</dbReference>
<dbReference type="GO" id="GO:0071346">
    <property type="term" value="P:cellular response to type II interferon"/>
    <property type="evidence" value="ECO:0000266"/>
    <property type="project" value="RGD"/>
</dbReference>
<dbReference type="GO" id="GO:0005513">
    <property type="term" value="P:detection of calcium ion"/>
    <property type="evidence" value="ECO:0000266"/>
    <property type="project" value="RGD"/>
</dbReference>
<dbReference type="GO" id="GO:0090150">
    <property type="term" value="P:establishment of protein localization to membrane"/>
    <property type="evidence" value="ECO:0000315"/>
    <property type="project" value="CAFA"/>
</dbReference>
<dbReference type="GO" id="GO:0090151">
    <property type="term" value="P:establishment of protein localization to mitochondrial membrane"/>
    <property type="evidence" value="ECO:0000315"/>
    <property type="project" value="CAFA"/>
</dbReference>
<dbReference type="GO" id="GO:0000086">
    <property type="term" value="P:G2/M transition of mitotic cell cycle"/>
    <property type="evidence" value="ECO:0000266"/>
    <property type="project" value="RGD"/>
</dbReference>
<dbReference type="GO" id="GO:1990456">
    <property type="term" value="P:mitochondrion-endoplasmic reticulum membrane tethering"/>
    <property type="evidence" value="ECO:0000250"/>
    <property type="project" value="UniProtKB"/>
</dbReference>
<dbReference type="GO" id="GO:1905913">
    <property type="term" value="P:negative regulation of calcium ion export across plasma membrane"/>
    <property type="evidence" value="ECO:0007669"/>
    <property type="project" value="Ensembl"/>
</dbReference>
<dbReference type="GO" id="GO:0060315">
    <property type="term" value="P:negative regulation of ryanodine-sensitive calcium-release channel activity"/>
    <property type="evidence" value="ECO:0000250"/>
    <property type="project" value="UniProtKB"/>
</dbReference>
<dbReference type="GO" id="GO:0140056">
    <property type="term" value="P:organelle localization by membrane tethering"/>
    <property type="evidence" value="ECO:0000250"/>
    <property type="project" value="UniProtKB"/>
</dbReference>
<dbReference type="GO" id="GO:0046427">
    <property type="term" value="P:positive regulation of receptor signaling pathway via JAK-STAT"/>
    <property type="evidence" value="ECO:0000266"/>
    <property type="project" value="RGD"/>
</dbReference>
<dbReference type="GO" id="GO:0140238">
    <property type="term" value="P:presynaptic endocytosis"/>
    <property type="evidence" value="ECO:0000266"/>
    <property type="project" value="RGD"/>
</dbReference>
<dbReference type="GO" id="GO:0050848">
    <property type="term" value="P:regulation of calcium-mediated signaling"/>
    <property type="evidence" value="ECO:0007669"/>
    <property type="project" value="Ensembl"/>
</dbReference>
<dbReference type="GO" id="GO:0098901">
    <property type="term" value="P:regulation of cardiac muscle cell action potential"/>
    <property type="evidence" value="ECO:0000266"/>
    <property type="project" value="RGD"/>
</dbReference>
<dbReference type="GO" id="GO:0055117">
    <property type="term" value="P:regulation of cardiac muscle contraction"/>
    <property type="evidence" value="ECO:0000266"/>
    <property type="project" value="RGD"/>
</dbReference>
<dbReference type="GO" id="GO:0032465">
    <property type="term" value="P:regulation of cytokinesis"/>
    <property type="evidence" value="ECO:0000266"/>
    <property type="project" value="RGD"/>
</dbReference>
<dbReference type="GO" id="GO:0002027">
    <property type="term" value="P:regulation of heart rate"/>
    <property type="evidence" value="ECO:0000266"/>
    <property type="project" value="RGD"/>
</dbReference>
<dbReference type="GO" id="GO:0010880">
    <property type="term" value="P:regulation of release of sequestered calcium ion into cytosol by sarcoplasmic reticulum"/>
    <property type="evidence" value="ECO:0000266"/>
    <property type="project" value="RGD"/>
</dbReference>
<dbReference type="GO" id="GO:0060314">
    <property type="term" value="P:regulation of ryanodine-sensitive calcium-release channel activity"/>
    <property type="evidence" value="ECO:0000250"/>
    <property type="project" value="UniProtKB"/>
</dbReference>
<dbReference type="GO" id="GO:1900242">
    <property type="term" value="P:regulation of synaptic vesicle endocytosis"/>
    <property type="evidence" value="ECO:0000315"/>
    <property type="project" value="CAFA"/>
</dbReference>
<dbReference type="GO" id="GO:2000300">
    <property type="term" value="P:regulation of synaptic vesicle exocytosis"/>
    <property type="evidence" value="ECO:0000315"/>
    <property type="project" value="CAFA"/>
</dbReference>
<dbReference type="GO" id="GO:0001975">
    <property type="term" value="P:response to amphetamine"/>
    <property type="evidence" value="ECO:0000270"/>
    <property type="project" value="RGD"/>
</dbReference>
<dbReference type="GO" id="GO:0051592">
    <property type="term" value="P:response to calcium ion"/>
    <property type="evidence" value="ECO:0000266"/>
    <property type="project" value="RGD"/>
</dbReference>
<dbReference type="CDD" id="cd00051">
    <property type="entry name" value="EFh"/>
    <property type="match status" value="2"/>
</dbReference>
<dbReference type="FunFam" id="1.10.238.10:FF:000527">
    <property type="entry name" value="Calmodulin-3"/>
    <property type="match status" value="1"/>
</dbReference>
<dbReference type="Gene3D" id="1.10.238.10">
    <property type="entry name" value="EF-hand"/>
    <property type="match status" value="3"/>
</dbReference>
<dbReference type="InterPro" id="IPR050230">
    <property type="entry name" value="CALM/Myosin/TropC-like"/>
</dbReference>
<dbReference type="InterPro" id="IPR011992">
    <property type="entry name" value="EF-hand-dom_pair"/>
</dbReference>
<dbReference type="InterPro" id="IPR018247">
    <property type="entry name" value="EF_Hand_1_Ca_BS"/>
</dbReference>
<dbReference type="InterPro" id="IPR002048">
    <property type="entry name" value="EF_hand_dom"/>
</dbReference>
<dbReference type="PANTHER" id="PTHR23048:SF0">
    <property type="entry name" value="CALMODULIN LIKE 3"/>
    <property type="match status" value="1"/>
</dbReference>
<dbReference type="PANTHER" id="PTHR23048">
    <property type="entry name" value="MYOSIN LIGHT CHAIN 1, 3"/>
    <property type="match status" value="1"/>
</dbReference>
<dbReference type="Pfam" id="PF13499">
    <property type="entry name" value="EF-hand_7"/>
    <property type="match status" value="2"/>
</dbReference>
<dbReference type="PRINTS" id="PR00450">
    <property type="entry name" value="RECOVERIN"/>
</dbReference>
<dbReference type="SMART" id="SM00054">
    <property type="entry name" value="EFh"/>
    <property type="match status" value="4"/>
</dbReference>
<dbReference type="SUPFAM" id="SSF47473">
    <property type="entry name" value="EF-hand"/>
    <property type="match status" value="1"/>
</dbReference>
<dbReference type="PROSITE" id="PS00018">
    <property type="entry name" value="EF_HAND_1"/>
    <property type="match status" value="4"/>
</dbReference>
<dbReference type="PROSITE" id="PS50222">
    <property type="entry name" value="EF_HAND_2"/>
    <property type="match status" value="4"/>
</dbReference>
<comment type="function">
    <text evidence="2">Calmodulin acts as part of a calcium signal transduction pathway by mediating the control of a large number of enzymes, ion channels, aquaporins and other proteins through calcium-binding. Calcium-binding is required for the activation of calmodulin. Among the enzymes to be stimulated by the calmodulin-calcium complex are a number of protein kinases, such as myosin light-chain kinases and calmodulin-dependent protein kinase type II (CaMK2), and phosphatases. Together with CCP110 and centrin, is involved in a genetic pathway that regulates the centrosome cycle and progression through cytokinesis. Is a regulator of voltage-dependent L-type calcium channels. Mediates calcium-dependent inactivation of CACNA1C. Positively regulates calcium-activated potassium channel activity of KCNN2. Forms a potassium channel complex with KCNQ1 and regulates electrophysiological activity of the channel via calcium-binding. Acts as a sensor to modulate the endoplasmic reticulum contacts with other organelles mediated by VMP1:ATP2A2.</text>
</comment>
<comment type="subunit">
    <text evidence="2 3 4 5 6 8 10 12 13 15">Homotetramer (By similarity). Interacts with CEP97, CCP110, TTN/titin and SRY (By similarity). Interacts with MYO5A and RRAD (PubMed:18056528). Interacts with USP6; the interaction is calcium dependent (By similarity). Interacts with CDK5RAP2 (By similarity). Interacts with SCN5A (By similarity). Interacts with RYR1 (By similarity). Interacts with FCHO1 (By similarity). Interacts with MIP in a 1:2 stoichiometry; the interaction with the cytoplasmic domains from two MIP subunits promotes MIP water channel closure (By similarity). Interacts with ORAI1; this may play a role in the regulation of ORAI1-mediated calcium transport (PubMed:23109337). Interacts with SYT7 (By similarity). Interacts with MYO10 and MYO1C (By similarity). Interacts with CEACAM1 (via cytoplasmic domain); this interaction is in a calcium dependent manner and reduces homophilic cell adhesion through dissociation of dimer (PubMed:8576129). Interacts with RYR2; regulates RYR2 calcium-release channel activity (By similarity). Interacts with PCP4; regulates calmodulin calcium-binding (By similarity). Interacts with the heterotetrameric KCNQ2 and KCNQ3 channel; the interaction is calcium-independent, constitutive and participates in the proper assembly of a functional heterotetrameric M channel (By similarity). Interacts with SLC9A1 in a calcium-dependent manner (By similarity). In the absence of Ca(+2), interacts with GIMAP4 (via IQ domain) (By similarity). Interacts with SCN8A; the interaction modulates the inactivation rate of SCN8A (By similarity). Interaction with KIF1A; the interaction is increased in presence of calcium and increases neuronal dense core vesicles motility (PubMed:30021165). Interacts with KCNN3 (By similarity). Interacts with KCNQ1 (via C-terminus); forms a heterooctameric structure (with 4:4 KCNQ1:CALM stoichiometry) in a calcium-independent manner (By similarity). Interacts with PIK3C3; the interaction modulates PIK3C3 kinase activity (By similarity). Interacts with HINT1; interaction increases in the presence of calcium ions (By similarity). Interacts with HINT3 (By similarity). Interacts with GARIN2; in mature sperm flagella (By similarity). Interacts with IQUB (By similarity). Interacts with SLC26A5 (via STAS domain); this interaction is calcium-dependent and the STAS domain interacts with only one lobe of CALM which is an elongated conformation (By similarity). Ca(2+)-bound CALM1 binds CNGA1:CNGB1 channel (via CaM1 and CaM2 regions); this interaction modulates the affinity of the channel for cNMPs in response to intracellular Ca(2+) levels. Interacts with ITPR1; this interaction inhibits inositol 1,4,5 trisphosphate binding in both the presence and absence of calcium and 1,4,5 trisphosphate-induced calcium release in the presence of calcium (By similarity). Component of the SIFI complex (By similarity). Interacts with KCNN2; this interaction regulates the channel activity through calcium-binding (PubMed:11323678). Interacts with KCNN4; this interaction allows channel opening (By similarity).</text>
</comment>
<comment type="subcellular location">
    <subcellularLocation>
        <location evidence="2">Cytoplasm</location>
        <location evidence="2">Cytoskeleton</location>
        <location evidence="2">Spindle</location>
    </subcellularLocation>
    <subcellularLocation>
        <location evidence="2">Cytoplasm</location>
        <location evidence="2">Cytoskeleton</location>
        <location evidence="2">Spindle pole</location>
    </subcellularLocation>
    <subcellularLocation>
        <location evidence="2">Cytoplasm</location>
        <location evidence="2">Cytoskeleton</location>
        <location evidence="2">Microtubule organizing center</location>
        <location evidence="2">Centrosome</location>
    </subcellularLocation>
    <subcellularLocation>
        <location evidence="3">Cell projection</location>
        <location evidence="3">Cilium</location>
        <location evidence="3">Flagellum</location>
    </subcellularLocation>
    <text evidence="2">Distributed throughout the cell during interphase, but during mitosis becomes dramatically localized to the spindle poles and the spindle microtubules.</text>
</comment>
<comment type="domain">
    <text evidence="2">The N-terminal and C-terminal lobes of CALM bind to the C-terminus of KCNQ1 in a clamp-like conformation. Binding of CALM C-terminus to KCNQ1 is calcium-independent but is essential for assembly of the structure. Binding of CALM N-terminus to KCNQ1 is calcium-dependent and regulates electrophysiological activity of the channel (By similarity). The C-lobe interacts with KCNN4 channels in a calcium-independent manner, whereas the N-lobe interacts with the S4-S5 linker of KCNN4 in a calcium-dependent manner playing a role as calcium sensor and gating the channel (By similarity).</text>
</comment>
<comment type="PTM">
    <text evidence="1">Ubiquitination results in a strongly decreased activity.</text>
</comment>
<comment type="PTM">
    <text evidence="9">Phosphorylation results in a decreased activity.</text>
</comment>
<comment type="miscellaneous">
    <text evidence="2">This protein has four functional calcium-binding sites.</text>
</comment>
<comment type="similarity">
    <text evidence="18">Belongs to the calmodulin family.</text>
</comment>
<organism>
    <name type="scientific">Rattus norvegicus</name>
    <name type="common">Rat</name>
    <dbReference type="NCBI Taxonomy" id="10116"/>
    <lineage>
        <taxon>Eukaryota</taxon>
        <taxon>Metazoa</taxon>
        <taxon>Chordata</taxon>
        <taxon>Craniata</taxon>
        <taxon>Vertebrata</taxon>
        <taxon>Euteleostomi</taxon>
        <taxon>Mammalia</taxon>
        <taxon>Eutheria</taxon>
        <taxon>Euarchontoglires</taxon>
        <taxon>Glires</taxon>
        <taxon>Rodentia</taxon>
        <taxon>Myomorpha</taxon>
        <taxon>Muroidea</taxon>
        <taxon>Muridae</taxon>
        <taxon>Murinae</taxon>
        <taxon>Rattus</taxon>
    </lineage>
</organism>
<feature type="initiator methionine" description="Removed" evidence="11 16">
    <location>
        <position position="1"/>
    </location>
</feature>
<feature type="chain" id="PRO_0000439938" description="Calmodulin-1">
    <location>
        <begin position="2"/>
        <end position="149"/>
    </location>
</feature>
<feature type="domain" description="EF-hand 1" evidence="7">
    <location>
        <begin position="8"/>
        <end position="43"/>
    </location>
</feature>
<feature type="domain" description="EF-hand 2" evidence="7">
    <location>
        <begin position="44"/>
        <end position="79"/>
    </location>
</feature>
<feature type="domain" description="EF-hand 3" evidence="7">
    <location>
        <begin position="81"/>
        <end position="116"/>
    </location>
</feature>
<feature type="domain" description="EF-hand 4" evidence="7">
    <location>
        <begin position="117"/>
        <end position="149"/>
    </location>
</feature>
<feature type="region of interest" description="Necessary and sufficient for interaction with PCP4" evidence="2">
    <location>
        <begin position="77"/>
        <end position="149"/>
    </location>
</feature>
<feature type="binding site" evidence="7 8 12 14 20 21 22 23 24 25 26 27 34 41 44 45 46 47 48 49 50">
    <location>
        <position position="21"/>
    </location>
    <ligand>
        <name>Ca(2+)</name>
        <dbReference type="ChEBI" id="CHEBI:29108"/>
        <label>1</label>
    </ligand>
</feature>
<feature type="binding site" evidence="7 8 12 14 20 21 22 23 24 25 26 27 34 41 44 45 46 47 48 49 50">
    <location>
        <position position="23"/>
    </location>
    <ligand>
        <name>Ca(2+)</name>
        <dbReference type="ChEBI" id="CHEBI:29108"/>
        <label>1</label>
    </ligand>
</feature>
<feature type="binding site" evidence="7 8 12 14 20 21 22 23 24 25 26 27 34 41 44 45 46 47 48 49 50">
    <location>
        <position position="25"/>
    </location>
    <ligand>
        <name>Ca(2+)</name>
        <dbReference type="ChEBI" id="CHEBI:29108"/>
        <label>1</label>
    </ligand>
</feature>
<feature type="binding site" evidence="7 8 12 14 20 21 22 23 24 25 26 27 34 41 44 45 46 47 48 49 50">
    <location>
        <position position="27"/>
    </location>
    <ligand>
        <name>Ca(2+)</name>
        <dbReference type="ChEBI" id="CHEBI:29108"/>
        <label>1</label>
    </ligand>
</feature>
<feature type="binding site" evidence="7 8 12 14 20 21 22 23 24 25 26 27 34 41 44 45 46 47 48 49 50">
    <location>
        <position position="32"/>
    </location>
    <ligand>
        <name>Ca(2+)</name>
        <dbReference type="ChEBI" id="CHEBI:29108"/>
        <label>1</label>
    </ligand>
</feature>
<feature type="binding site" evidence="7 8 12 14 20 21 22 23 24 25 26 27 28 29 30 31 32 33 34 35 36 37 38 39 40 41 42 43 44 45 46 47 48 49 50">
    <location>
        <position position="57"/>
    </location>
    <ligand>
        <name>Ca(2+)</name>
        <dbReference type="ChEBI" id="CHEBI:29108"/>
        <label>2</label>
    </ligand>
</feature>
<feature type="binding site" evidence="7 8 12 14 20 21 22 23 24 25 26 27 28 29 30 31 32 33 34 35 36 37 38 39 40 41 42 43 44 45 46 47 48 49 50">
    <location>
        <position position="59"/>
    </location>
    <ligand>
        <name>Ca(2+)</name>
        <dbReference type="ChEBI" id="CHEBI:29108"/>
        <label>2</label>
    </ligand>
</feature>
<feature type="binding site" evidence="7 8 12 14 20 21 22 23 24 25 26 27 28 29 30 31 32 33 34 35 36 37 38 39 40 41 42 43 44 45 46 47 48 49 50">
    <location>
        <position position="61"/>
    </location>
    <ligand>
        <name>Ca(2+)</name>
        <dbReference type="ChEBI" id="CHEBI:29108"/>
        <label>2</label>
    </ligand>
</feature>
<feature type="binding site" evidence="7 8 12 14 20 21 22 23 24 25 26 27 28 29 30 31 32 33 34 35 36 37 38 39 40 41 42 43 44 45 46 47 48 49 50">
    <location>
        <position position="63"/>
    </location>
    <ligand>
        <name>Ca(2+)</name>
        <dbReference type="ChEBI" id="CHEBI:29108"/>
        <label>2</label>
    </ligand>
</feature>
<feature type="binding site" evidence="7 8 12 14 20 21 22 23 24 25 26 27 28 29 30 31 32 33 34 35 36 37 38 39 40 41 42 43 44 45 46 47 48 49 50">
    <location>
        <position position="68"/>
    </location>
    <ligand>
        <name>Ca(2+)</name>
        <dbReference type="ChEBI" id="CHEBI:29108"/>
        <label>2</label>
    </ligand>
</feature>
<feature type="binding site" evidence="7 12 14 21 22 23 25 26 27 28 29 30 31 32 33 35 36 37 38 39 40 41 42 43 44 47 51">
    <location>
        <position position="94"/>
    </location>
    <ligand>
        <name>Ca(2+)</name>
        <dbReference type="ChEBI" id="CHEBI:29108"/>
        <label>3</label>
    </ligand>
</feature>
<feature type="binding site" evidence="7 12 14 21 22 23 25 26 27 28 29 30 31 32 33 35 36 37 38 39 40 41 42 43 44 47 51">
    <location>
        <position position="96"/>
    </location>
    <ligand>
        <name>Ca(2+)</name>
        <dbReference type="ChEBI" id="CHEBI:29108"/>
        <label>3</label>
    </ligand>
</feature>
<feature type="binding site" evidence="7 12 14 21 22 23 25 26 27 28 29 30 31 32 33 35 36 37 38 39 40 41 42 43 44 47 51">
    <location>
        <position position="98"/>
    </location>
    <ligand>
        <name>Ca(2+)</name>
        <dbReference type="ChEBI" id="CHEBI:29108"/>
        <label>3</label>
    </ligand>
</feature>
<feature type="binding site" evidence="7 12 14 21 22 23 25 26 27 28 29 30 31 32 33 35 36 37 38 39 40 41 42 43 44 47 51">
    <location>
        <position position="100"/>
    </location>
    <ligand>
        <name>Ca(2+)</name>
        <dbReference type="ChEBI" id="CHEBI:29108"/>
        <label>3</label>
    </ligand>
</feature>
<feature type="binding site" evidence="7 12 14 21 22 23 25 26 27 28 29 30 31 32 33 35 36 37 38 39 40 41 42 43 44 47 51">
    <location>
        <position position="105"/>
    </location>
    <ligand>
        <name>Ca(2+)</name>
        <dbReference type="ChEBI" id="CHEBI:29108"/>
        <label>3</label>
    </ligand>
</feature>
<feature type="binding site" evidence="7 12 14 21 22 23 25 26 27 29 30 31 32 33 35 36 37 38 40 41 42 43 44 47 51">
    <location>
        <position position="130"/>
    </location>
    <ligand>
        <name>Ca(2+)</name>
        <dbReference type="ChEBI" id="CHEBI:29108"/>
        <label>4</label>
    </ligand>
</feature>
<feature type="binding site" evidence="7 12 14 21 22 23 25 26 27 29 30 31 32 33 35 36 37 38 40 41 42 43 44 47 51">
    <location>
        <position position="132"/>
    </location>
    <ligand>
        <name>Ca(2+)</name>
        <dbReference type="ChEBI" id="CHEBI:29108"/>
        <label>4</label>
    </ligand>
</feature>
<feature type="binding site" evidence="7 12 14 21 22 23 25 26 27 29 30 31 32 33 35 36 37 38 40 41 42 43 44 47 51">
    <location>
        <position position="134"/>
    </location>
    <ligand>
        <name>Ca(2+)</name>
        <dbReference type="ChEBI" id="CHEBI:29108"/>
        <label>4</label>
    </ligand>
</feature>
<feature type="binding site" evidence="7 12 14 21 22 23 25 26 27 29 30 31 32 33 35 36 37 38 40 41 42 43 44 47 51">
    <location>
        <position position="136"/>
    </location>
    <ligand>
        <name>Ca(2+)</name>
        <dbReference type="ChEBI" id="CHEBI:29108"/>
        <label>4</label>
    </ligand>
</feature>
<feature type="binding site" evidence="7 12 14 21 22 23 25 26 27 29 30 31 32 33 35 36 37 38 40 41 42 43 44 47 51">
    <location>
        <position position="141"/>
    </location>
    <ligand>
        <name>Ca(2+)</name>
        <dbReference type="ChEBI" id="CHEBI:29108"/>
        <label>4</label>
    </ligand>
</feature>
<feature type="modified residue" description="N-acetylalanine" evidence="11 16">
    <location>
        <position position="2"/>
    </location>
</feature>
<feature type="modified residue" description="N6-acetyllysine; alternate" evidence="2">
    <location>
        <position position="22"/>
    </location>
</feature>
<feature type="modified residue" description="Phosphothreonine; by CaMK4" evidence="9">
    <location>
        <position position="45"/>
    </location>
</feature>
<feature type="modified residue" description="Phosphoserine" evidence="2">
    <location>
        <position position="82"/>
    </location>
</feature>
<feature type="modified residue" description="N6-acetyllysine" evidence="2">
    <location>
        <position position="95"/>
    </location>
</feature>
<feature type="modified residue" description="Phosphotyrosine" evidence="52">
    <location>
        <position position="100"/>
    </location>
</feature>
<feature type="modified residue" description="Phosphoserine" evidence="52">
    <location>
        <position position="102"/>
    </location>
</feature>
<feature type="modified residue" description="Phosphothreonine" evidence="2">
    <location>
        <position position="111"/>
    </location>
</feature>
<feature type="modified residue" description="N6,N6,N6-trimethyllysine; alternate" evidence="11">
    <location>
        <position position="116"/>
    </location>
</feature>
<feature type="modified residue" description="N6-methyllysine; alternate" evidence="2">
    <location>
        <position position="116"/>
    </location>
</feature>
<feature type="modified residue" description="Phosphotyrosine" evidence="2">
    <location>
        <position position="139"/>
    </location>
</feature>
<feature type="cross-link" description="Glycyl lysine isopeptide (Lys-Gly) (interchain with G-Cter in SUMO2); alternate" evidence="2">
    <location>
        <position position="22"/>
    </location>
</feature>
<feature type="cross-link" description="Glycyl lysine isopeptide (Lys-Gly) (interchain with G-Cter in ubiquitin); alternate" evidence="4">
    <location>
        <position position="22"/>
    </location>
</feature>
<feature type="helix" evidence="53">
    <location>
        <begin position="7"/>
        <end position="19"/>
    </location>
</feature>
<feature type="strand" evidence="53">
    <location>
        <begin position="24"/>
        <end position="29"/>
    </location>
</feature>
<feature type="helix" evidence="53">
    <location>
        <begin position="30"/>
        <end position="32"/>
    </location>
</feature>
<feature type="helix" evidence="53">
    <location>
        <begin position="33"/>
        <end position="39"/>
    </location>
</feature>
<feature type="helix" evidence="53">
    <location>
        <begin position="46"/>
        <end position="56"/>
    </location>
</feature>
<feature type="strand" evidence="53">
    <location>
        <begin position="61"/>
        <end position="65"/>
    </location>
</feature>
<feature type="helix" evidence="53">
    <location>
        <begin position="66"/>
        <end position="76"/>
    </location>
</feature>
<feature type="turn" evidence="54">
    <location>
        <begin position="79"/>
        <end position="81"/>
    </location>
</feature>
<feature type="helix" evidence="55">
    <location>
        <begin position="83"/>
        <end position="91"/>
    </location>
</feature>
<feature type="strand" evidence="55">
    <location>
        <begin position="97"/>
        <end position="102"/>
    </location>
</feature>
<feature type="helix" evidence="55">
    <location>
        <begin position="103"/>
        <end position="110"/>
    </location>
</feature>
<feature type="strand" evidence="56">
    <location>
        <begin position="113"/>
        <end position="115"/>
    </location>
</feature>
<feature type="helix" evidence="55">
    <location>
        <begin position="119"/>
        <end position="129"/>
    </location>
</feature>
<feature type="strand" evidence="55">
    <location>
        <begin position="133"/>
        <end position="138"/>
    </location>
</feature>
<feature type="helix" evidence="55">
    <location>
        <begin position="139"/>
        <end position="147"/>
    </location>
</feature>
<protein>
    <recommendedName>
        <fullName evidence="2">Calmodulin-1</fullName>
    </recommendedName>
</protein>
<reference key="1">
    <citation type="journal article" date="1987" name="J. Mol. Biol.">
        <title>Structure of a gene for rat calmodulin.</title>
        <authorList>
            <person name="Nojima H."/>
            <person name="Hirofumi S."/>
        </authorList>
    </citation>
    <scope>NUCLEOTIDE SEQUENCE [MRNA]</scope>
    <scope>NUCLEOTIDE SEQUENCE [GENOMIC DNA]</scope>
    <source>
        <tissue>Brain</tissue>
    </source>
</reference>
<reference key="2">
    <citation type="journal article" date="1992" name="Brain Res. Mol. Brain Res.">
        <title>Molecular cloning of calmodulin mRNA species which are preferentially expressed in neurons in the rat brain.</title>
        <authorList>
            <person name="Ni B."/>
            <person name="Rush S."/>
            <person name="Gurd J.W."/>
            <person name="Brown I.R."/>
        </authorList>
    </citation>
    <scope>NUCLEOTIDE SEQUENCE [MRNA]</scope>
    <source>
        <strain>Wistar</strain>
        <tissue>Brain</tissue>
    </source>
</reference>
<reference key="3">
    <citation type="journal article" date="1978" name="J. Biol. Chem.">
        <title>Sequence homology of the Ca2+-dependent regulator of cyclic nucleotide phosphodiesterase from rat testis with other Ca2+-binding proteins.</title>
        <authorList>
            <person name="Dedman J.R."/>
            <person name="Jackson R.L."/>
            <person name="Schreiber W.E."/>
            <person name="Means A.R."/>
        </authorList>
    </citation>
    <scope>PROTEIN SEQUENCE OF 2-149</scope>
    <scope>ACETYLATION AT ALA-2</scope>
    <scope>METHYLATION AT LYS-116</scope>
    <source>
        <tissue>Testis</tissue>
    </source>
</reference>
<reference key="4">
    <citation type="submission" date="2007-09" db="UniProtKB">
        <authorList>
            <person name="Lubec G."/>
            <person name="Chen W.-Q."/>
            <person name="Kang S.U."/>
            <person name="Lubec S."/>
        </authorList>
    </citation>
    <scope>PROTEIN SEQUENCE OF 15-31; 79-87 AND 92-107</scope>
    <scope>IDENTIFICATION BY MASS SPECTROMETRY</scope>
    <source>
        <strain>Sprague-Dawley</strain>
        <tissue>Brain</tissue>
        <tissue>Hippocampus</tissue>
    </source>
</reference>
<reference key="5">
    <citation type="journal article" date="1996" name="J. Biol. Chem.">
        <title>Calmodulin binds to specific sequences in the cytoplasmic domain of C-CAM and down-regulates C-CAM self-association.</title>
        <authorList>
            <person name="Edlund M."/>
            <person name="Blikstad I."/>
            <person name="Obrink B."/>
        </authorList>
    </citation>
    <scope>INTERACTION WITH CEACAM1</scope>
</reference>
<reference key="6">
    <citation type="journal article" date="2002" name="Arch. Biochem. Biophys.">
        <title>Phosphorylation of calmodulin by Ca2+/calmodulin-dependent protein kinase IV.</title>
        <authorList>
            <person name="Ishida A."/>
            <person name="Kameshita I."/>
            <person name="Okuno S."/>
            <person name="Kitani T."/>
            <person name="Fujisawa H."/>
        </authorList>
    </citation>
    <scope>PHOSPHORYLATION AT THR-45</scope>
</reference>
<reference key="7">
    <citation type="journal article" date="2007" name="Circulation">
        <title>Rad GTPase deficiency leads to cardiac hypertrophy.</title>
        <authorList>
            <person name="Chang L."/>
            <person name="Zhang J."/>
            <person name="Tseng Y.-H."/>
            <person name="Xie C.-Q."/>
            <person name="Ilany J."/>
            <person name="Bruning J.C."/>
            <person name="Sun Z."/>
            <person name="Zhu X."/>
            <person name="Cui T."/>
            <person name="Youker K.A."/>
            <person name="Yang Q."/>
            <person name="Day S.M."/>
            <person name="Kahn C.R."/>
            <person name="Chen Y.E."/>
        </authorList>
    </citation>
    <scope>INTERACTION WITH RRAD</scope>
</reference>
<reference key="8">
    <citation type="submission" date="2007-02" db="UniProtKB">
        <authorList>
            <person name="Lubec G."/>
            <person name="Chen W.-Q."/>
        </authorList>
    </citation>
    <scope>ACETYLATION AT ALA-2</scope>
    <scope>IDENTIFICATION BY MASS SPECTROMETRY</scope>
</reference>
<reference key="9">
    <citation type="journal article" date="2012" name="Nat. Commun.">
        <title>Quantitative maps of protein phosphorylation sites across 14 different rat organs and tissues.</title>
        <authorList>
            <person name="Lundby A."/>
            <person name="Secher A."/>
            <person name="Lage K."/>
            <person name="Nordsborg N.B."/>
            <person name="Dmytriyev A."/>
            <person name="Lundby C."/>
            <person name="Olsen J.V."/>
        </authorList>
    </citation>
    <scope>PHOSPHORYLATION [LARGE SCALE ANALYSIS] AT TYR-100 AND SER-102</scope>
    <scope>IDENTIFICATION BY MASS SPECTROMETRY [LARGE SCALE ANALYSIS]</scope>
</reference>
<reference key="10">
    <citation type="journal article" date="2018" name="Cell Rep.">
        <title>Regulation of KIF1A-Driven Dense Core Vesicle Transport: Ca2+/CaM Controls DCV Binding and Liprin-alpha/TANC2 Recruits DCVs to Postsynaptic Sites.</title>
        <authorList>
            <person name="Stucchi R."/>
            <person name="Plucinska G."/>
            <person name="Hummel J.J.A."/>
            <person name="Zahavi E.E."/>
            <person name="Guerra San Juan I."/>
            <person name="Klykov O."/>
            <person name="Scheltema R.A."/>
            <person name="Altelaar A.F.M."/>
            <person name="Hoogenraad C.C."/>
        </authorList>
    </citation>
    <scope>INTERACTION WITH KIF1A</scope>
</reference>
<reference key="11">
    <citation type="journal article" date="1985" name="Nature">
        <title>Three-dimensional structure of calmodulin.</title>
        <authorList>
            <person name="Babu Y.S."/>
            <person name="Sack J.S."/>
            <person name="Greenhough T.J."/>
            <person name="Bugg C.E."/>
            <person name="Means A.R."/>
            <person name="Cook W.J."/>
        </authorList>
    </citation>
    <scope>X-RAY CRYSTALLOGRAPHY (3.0 ANGSTROMS)</scope>
</reference>
<reference evidence="27" key="12">
    <citation type="journal article" date="1988" name="J. Mol. Biol.">
        <title>Structure of calmodulin refined at 2.2-A resolution.</title>
        <authorList>
            <person name="Babu Y.S."/>
            <person name="Bugg C.E."/>
            <person name="Cook W.J."/>
        </authorList>
    </citation>
    <scope>X-RAY CRYSTALLOGRAPHY (2.2 ANGSTROMS) OF 2-149 IN COMPLEX WITH CALCIUM</scope>
</reference>
<reference evidence="20" key="13">
    <citation type="journal article" date="2001" name="Nature">
        <title>Structure of the gating domain of a Ca2+-activated K+ channel complexed with Ca2+/calmodulin.</title>
        <authorList>
            <person name="Schumacher M.A."/>
            <person name="Rivard A.F."/>
            <person name="Bachinger H.P."/>
            <person name="Adelman J.P."/>
        </authorList>
    </citation>
    <scope>X-RAY CRYSTALLOGRAPHY (1.60 ANGSTROMS) OF 2-149 IN COMPLEX WITH CA(2+) AND KCNN2</scope>
</reference>
<reference evidence="44" key="14">
    <citation type="journal article" date="2012" name="J. Biol. Chem.">
        <title>Crystal structure of calmodulin binding domain of orai1 in complex with Ca2+ calmodulin displays a unique binding mode.</title>
        <authorList>
            <person name="Liu Y."/>
            <person name="Zheng X."/>
            <person name="Mueller G.A."/>
            <person name="Sobhany M."/>
            <person name="DeRose E.F."/>
            <person name="Zhang Y."/>
            <person name="London R.E."/>
            <person name="Birnbaumer L."/>
        </authorList>
    </citation>
    <scope>X-RAY CRYSTALLOGRAPHY (1.90 ANGSTROMS) IN COMPLEX WITH ORAI1 AND CALCIUM</scope>
    <scope>INTERACTION WITH ORAI1</scope>
</reference>
<sequence>MADQLTEEQIAEFKEAFSLFDKDGDGTITTKELGTVMRSLGQNPTEAELQDMINEVDADGNGTIDFPEFLTMMARKMKDTDSEEEIREAFRVFDKDGNGYISAAELRHVMTNLGEKLTDEEVDEMIREADIDGDGQVNYEEFVQMMTAK</sequence>
<evidence type="ECO:0000250" key="1"/>
<evidence type="ECO:0000250" key="2">
    <source>
        <dbReference type="UniProtKB" id="P0DP23"/>
    </source>
</evidence>
<evidence type="ECO:0000250" key="3">
    <source>
        <dbReference type="UniProtKB" id="P0DP26"/>
    </source>
</evidence>
<evidence type="ECO:0000250" key="4">
    <source>
        <dbReference type="UniProtKB" id="P62157"/>
    </source>
</evidence>
<evidence type="ECO:0000250" key="5">
    <source>
        <dbReference type="UniProtKB" id="P62158"/>
    </source>
</evidence>
<evidence type="ECO:0000250" key="6">
    <source>
        <dbReference type="UniProtKB" id="P62204"/>
    </source>
</evidence>
<evidence type="ECO:0000255" key="7">
    <source>
        <dbReference type="PROSITE-ProRule" id="PRU00448"/>
    </source>
</evidence>
<evidence type="ECO:0000269" key="8">
    <source>
    </source>
</evidence>
<evidence type="ECO:0000269" key="9">
    <source>
    </source>
</evidence>
<evidence type="ECO:0000269" key="10">
    <source>
    </source>
</evidence>
<evidence type="ECO:0000269" key="11">
    <source>
    </source>
</evidence>
<evidence type="ECO:0000269" key="12">
    <source>
    </source>
</evidence>
<evidence type="ECO:0000269" key="13">
    <source>
    </source>
</evidence>
<evidence type="ECO:0000269" key="14">
    <source>
    </source>
</evidence>
<evidence type="ECO:0000269" key="15">
    <source>
    </source>
</evidence>
<evidence type="ECO:0000269" key="16">
    <source ref="8"/>
</evidence>
<evidence type="ECO:0000303" key="17">
    <source>
    </source>
</evidence>
<evidence type="ECO:0000305" key="18"/>
<evidence type="ECO:0000312" key="19">
    <source>
        <dbReference type="RGD" id="2257"/>
    </source>
</evidence>
<evidence type="ECO:0007744" key="20">
    <source>
        <dbReference type="PDB" id="1G4Y"/>
    </source>
</evidence>
<evidence type="ECO:0007744" key="21">
    <source>
        <dbReference type="PDB" id="1NIW"/>
    </source>
</evidence>
<evidence type="ECO:0007744" key="22">
    <source>
        <dbReference type="PDB" id="2HQW"/>
    </source>
</evidence>
<evidence type="ECO:0007744" key="23">
    <source>
        <dbReference type="PDB" id="2YGG"/>
    </source>
</evidence>
<evidence type="ECO:0007744" key="24">
    <source>
        <dbReference type="PDB" id="3B32"/>
    </source>
</evidence>
<evidence type="ECO:0007744" key="25">
    <source>
        <dbReference type="PDB" id="3BXK"/>
    </source>
</evidence>
<evidence type="ECO:0007744" key="26">
    <source>
        <dbReference type="PDB" id="3BXL"/>
    </source>
</evidence>
<evidence type="ECO:0007744" key="27">
    <source>
        <dbReference type="PDB" id="3CLN"/>
    </source>
</evidence>
<evidence type="ECO:0007744" key="28">
    <source>
        <dbReference type="PDB" id="3EK4"/>
    </source>
</evidence>
<evidence type="ECO:0007744" key="29">
    <source>
        <dbReference type="PDB" id="3EK7"/>
    </source>
</evidence>
<evidence type="ECO:0007744" key="30">
    <source>
        <dbReference type="PDB" id="3EK8"/>
    </source>
</evidence>
<evidence type="ECO:0007744" key="31">
    <source>
        <dbReference type="PDB" id="3EKH"/>
    </source>
</evidence>
<evidence type="ECO:0007744" key="32">
    <source>
        <dbReference type="PDB" id="3EVR"/>
    </source>
</evidence>
<evidence type="ECO:0007744" key="33">
    <source>
        <dbReference type="PDB" id="3EVU"/>
    </source>
</evidence>
<evidence type="ECO:0007744" key="34">
    <source>
        <dbReference type="PDB" id="3IFK"/>
    </source>
</evidence>
<evidence type="ECO:0007744" key="35">
    <source>
        <dbReference type="PDB" id="3SG2"/>
    </source>
</evidence>
<evidence type="ECO:0007744" key="36">
    <source>
        <dbReference type="PDB" id="3SG3"/>
    </source>
</evidence>
<evidence type="ECO:0007744" key="37">
    <source>
        <dbReference type="PDB" id="3SG4"/>
    </source>
</evidence>
<evidence type="ECO:0007744" key="38">
    <source>
        <dbReference type="PDB" id="3SG5"/>
    </source>
</evidence>
<evidence type="ECO:0007744" key="39">
    <source>
        <dbReference type="PDB" id="3SG6"/>
    </source>
</evidence>
<evidence type="ECO:0007744" key="40">
    <source>
        <dbReference type="PDB" id="3SG7"/>
    </source>
</evidence>
<evidence type="ECO:0007744" key="41">
    <source>
        <dbReference type="PDB" id="3SJQ"/>
    </source>
</evidence>
<evidence type="ECO:0007744" key="42">
    <source>
        <dbReference type="PDB" id="3WLC"/>
    </source>
</evidence>
<evidence type="ECO:0007744" key="43">
    <source>
        <dbReference type="PDB" id="3WLD"/>
    </source>
</evidence>
<evidence type="ECO:0007744" key="44">
    <source>
        <dbReference type="PDB" id="4EHQ"/>
    </source>
</evidence>
<evidence type="ECO:0007744" key="45">
    <source>
        <dbReference type="PDB" id="4G27"/>
    </source>
</evidence>
<evidence type="ECO:0007744" key="46">
    <source>
        <dbReference type="PDB" id="4G28"/>
    </source>
</evidence>
<evidence type="ECO:0007744" key="47">
    <source>
        <dbReference type="PDB" id="4I2Y"/>
    </source>
</evidence>
<evidence type="ECO:0007744" key="48">
    <source>
        <dbReference type="PDB" id="4J9Y"/>
    </source>
</evidence>
<evidence type="ECO:0007744" key="49">
    <source>
        <dbReference type="PDB" id="4J9Z"/>
    </source>
</evidence>
<evidence type="ECO:0007744" key="50">
    <source>
        <dbReference type="PDB" id="4QNH"/>
    </source>
</evidence>
<evidence type="ECO:0007744" key="51">
    <source>
        <dbReference type="PDB" id="4RJD"/>
    </source>
</evidence>
<evidence type="ECO:0007744" key="52">
    <source>
    </source>
</evidence>
<evidence type="ECO:0007829" key="53">
    <source>
        <dbReference type="PDB" id="2PQ3"/>
    </source>
</evidence>
<evidence type="ECO:0007829" key="54">
    <source>
        <dbReference type="PDB" id="3SG7"/>
    </source>
</evidence>
<evidence type="ECO:0007829" key="55">
    <source>
        <dbReference type="PDB" id="4J9Y"/>
    </source>
</evidence>
<evidence type="ECO:0007829" key="56">
    <source>
        <dbReference type="PDB" id="6MBA"/>
    </source>
</evidence>
<gene>
    <name evidence="19" type="primary">Calm1</name>
    <name type="synonym">Calm</name>
    <name type="synonym">Cam</name>
    <name type="synonym">Cam1</name>
    <name evidence="17" type="synonym">CaMI</name>
</gene>
<proteinExistence type="evidence at protein level"/>
<accession>P0DP29</accession>
<accession>P02593</accession>
<accession>P62161</accession>
<accession>P70667</accession>
<accession>P99014</accession>
<accession>Q61379</accession>
<accession>Q61380</accession>
<keyword id="KW-0002">3D-structure</keyword>
<keyword id="KW-0007">Acetylation</keyword>
<keyword id="KW-0106">Calcium</keyword>
<keyword id="KW-0966">Cell projection</keyword>
<keyword id="KW-0969">Cilium</keyword>
<keyword id="KW-0963">Cytoplasm</keyword>
<keyword id="KW-0206">Cytoskeleton</keyword>
<keyword id="KW-0903">Direct protein sequencing</keyword>
<keyword id="KW-0282">Flagellum</keyword>
<keyword id="KW-1017">Isopeptide bond</keyword>
<keyword id="KW-0479">Metal-binding</keyword>
<keyword id="KW-0488">Methylation</keyword>
<keyword id="KW-0597">Phosphoprotein</keyword>
<keyword id="KW-1185">Reference proteome</keyword>
<keyword id="KW-0677">Repeat</keyword>
<keyword id="KW-0832">Ubl conjugation</keyword>
<name>CALM1_RAT</name>